<accession>Q8IXL6</accession>
<accession>A4D2Q5</accession>
<accession>L8B5W8</accession>
<accession>Q5I0W9</accession>
<accession>Q7Z4I0</accession>
<accession>Q9NPT2</accession>
<keyword id="KW-0002">3D-structure</keyword>
<keyword id="KW-0025">Alternative splicing</keyword>
<keyword id="KW-0067">ATP-binding</keyword>
<keyword id="KW-0091">Biomineralization</keyword>
<keyword id="KW-0106">Calcium</keyword>
<keyword id="KW-0903">Direct protein sequencing</keyword>
<keyword id="KW-0225">Disease variant</keyword>
<keyword id="KW-1015">Disulfide bond</keyword>
<keyword id="KW-0256">Endoplasmic reticulum</keyword>
<keyword id="KW-0325">Glycoprotein</keyword>
<keyword id="KW-0333">Golgi apparatus</keyword>
<keyword id="KW-0418">Kinase</keyword>
<keyword id="KW-0464">Manganese</keyword>
<keyword id="KW-0472">Membrane</keyword>
<keyword id="KW-0479">Metal-binding</keyword>
<keyword id="KW-0547">Nucleotide-binding</keyword>
<keyword id="KW-0597">Phosphoprotein</keyword>
<keyword id="KW-1267">Proteomics identification</keyword>
<keyword id="KW-1185">Reference proteome</keyword>
<keyword id="KW-0964">Secreted</keyword>
<keyword id="KW-0723">Serine/threonine-protein kinase</keyword>
<keyword id="KW-0735">Signal-anchor</keyword>
<keyword id="KW-0808">Transferase</keyword>
<keyword id="KW-0812">Transmembrane</keyword>
<keyword id="KW-1133">Transmembrane helix</keyword>
<gene>
    <name evidence="20" type="primary">FAM20C</name>
    <name evidence="1" type="synonym">DMP4</name>
</gene>
<proteinExistence type="evidence at protein level"/>
<dbReference type="EC" id="2.7.11.1" evidence="8 9 10 12 13 14"/>
<dbReference type="EMBL" id="AF533706">
    <property type="protein sequence ID" value="AAQ09019.1"/>
    <property type="molecule type" value="mRNA"/>
</dbReference>
<dbReference type="EMBL" id="AB545605">
    <property type="protein sequence ID" value="BAM78534.1"/>
    <property type="molecule type" value="mRNA"/>
</dbReference>
<dbReference type="EMBL" id="AC093627">
    <property type="status" value="NOT_ANNOTATED_CDS"/>
    <property type="molecule type" value="Genomic_DNA"/>
</dbReference>
<dbReference type="EMBL" id="AC145676">
    <property type="status" value="NOT_ANNOTATED_CDS"/>
    <property type="molecule type" value="Genomic_DNA"/>
</dbReference>
<dbReference type="EMBL" id="AC187652">
    <property type="status" value="NOT_ANNOTATED_CDS"/>
    <property type="molecule type" value="Genomic_DNA"/>
</dbReference>
<dbReference type="EMBL" id="CH236966">
    <property type="protein sequence ID" value="EAL23705.1"/>
    <property type="status" value="ALT_INIT"/>
    <property type="molecule type" value="Genomic_DNA"/>
</dbReference>
<dbReference type="EMBL" id="CH471144">
    <property type="protein sequence ID" value="EAW87149.1"/>
    <property type="molecule type" value="Genomic_DNA"/>
</dbReference>
<dbReference type="EMBL" id="BC040074">
    <property type="protein sequence ID" value="AAH40074.1"/>
    <property type="status" value="ALT_INIT"/>
    <property type="molecule type" value="mRNA"/>
</dbReference>
<dbReference type="EMBL" id="BC087853">
    <property type="protein sequence ID" value="AAH87853.1"/>
    <property type="molecule type" value="mRNA"/>
</dbReference>
<dbReference type="EMBL" id="AL390147">
    <property type="protein sequence ID" value="CAB99089.2"/>
    <property type="molecule type" value="mRNA"/>
</dbReference>
<dbReference type="CCDS" id="CCDS47522.1">
    <molecule id="Q8IXL6-1"/>
</dbReference>
<dbReference type="PIR" id="T51872">
    <property type="entry name" value="T51872"/>
</dbReference>
<dbReference type="RefSeq" id="NP_064608.2">
    <molecule id="Q8IXL6-1"/>
    <property type="nucleotide sequence ID" value="NM_020223.4"/>
</dbReference>
<dbReference type="PDB" id="5YH3">
    <property type="method" value="X-ray"/>
    <property type="resolution" value="3.30 A"/>
    <property type="chains" value="C/D=141-578"/>
</dbReference>
<dbReference type="PDBsum" id="5YH3"/>
<dbReference type="SMR" id="Q8IXL6"/>
<dbReference type="BioGRID" id="121294">
    <property type="interactions" value="191"/>
</dbReference>
<dbReference type="FunCoup" id="Q8IXL6">
    <property type="interactions" value="512"/>
</dbReference>
<dbReference type="IntAct" id="Q8IXL6">
    <property type="interactions" value="77"/>
</dbReference>
<dbReference type="MINT" id="Q8IXL6"/>
<dbReference type="STRING" id="9606.ENSP00000322323"/>
<dbReference type="BindingDB" id="Q8IXL6"/>
<dbReference type="ChEMBL" id="CHEMBL4879492"/>
<dbReference type="GlyConnect" id="1230">
    <property type="glycosylation" value="11 N-Linked glycans (2 sites)"/>
</dbReference>
<dbReference type="GlyCosmos" id="Q8IXL6">
    <property type="glycosylation" value="8 sites, 12 glycans"/>
</dbReference>
<dbReference type="GlyGen" id="Q8IXL6">
    <property type="glycosylation" value="12 sites, 26 N-linked glycans (3 sites), 2 O-linked glycans (9 sites)"/>
</dbReference>
<dbReference type="iPTMnet" id="Q8IXL6"/>
<dbReference type="PhosphoSitePlus" id="Q8IXL6"/>
<dbReference type="BioMuta" id="FAM20C"/>
<dbReference type="DMDM" id="327478506"/>
<dbReference type="jPOST" id="Q8IXL6"/>
<dbReference type="MassIVE" id="Q8IXL6"/>
<dbReference type="PaxDb" id="9606-ENSP00000322323"/>
<dbReference type="PeptideAtlas" id="Q8IXL6"/>
<dbReference type="ProteomicsDB" id="71022">
    <molecule id="Q8IXL6-1"/>
</dbReference>
<dbReference type="ProteomicsDB" id="71023">
    <molecule id="Q8IXL6-2"/>
</dbReference>
<dbReference type="Antibodypedia" id="5456">
    <property type="antibodies" value="149 antibodies from 24 providers"/>
</dbReference>
<dbReference type="DNASU" id="56975"/>
<dbReference type="Ensembl" id="ENST00000313766.6">
    <molecule id="Q8IXL6-1"/>
    <property type="protein sequence ID" value="ENSP00000322323.5"/>
    <property type="gene ID" value="ENSG00000177706.9"/>
</dbReference>
<dbReference type="Ensembl" id="ENST00000672066.1">
    <molecule id="Q8IXL6-1"/>
    <property type="protein sequence ID" value="ENSP00000499851.1"/>
    <property type="gene ID" value="ENSG00000288499.1"/>
</dbReference>
<dbReference type="GeneID" id="56975"/>
<dbReference type="KEGG" id="hsa:56975"/>
<dbReference type="MANE-Select" id="ENST00000313766.6">
    <property type="protein sequence ID" value="ENSP00000322323.5"/>
    <property type="RefSeq nucleotide sequence ID" value="NM_020223.4"/>
    <property type="RefSeq protein sequence ID" value="NP_064608.2"/>
</dbReference>
<dbReference type="UCSC" id="uc003sip.4">
    <molecule id="Q8IXL6-1"/>
    <property type="organism name" value="human"/>
</dbReference>
<dbReference type="AGR" id="HGNC:22140"/>
<dbReference type="CTD" id="56975"/>
<dbReference type="DisGeNET" id="56975"/>
<dbReference type="GeneCards" id="FAM20C"/>
<dbReference type="HGNC" id="HGNC:22140">
    <property type="gene designation" value="FAM20C"/>
</dbReference>
<dbReference type="HPA" id="ENSG00000177706">
    <property type="expression patterns" value="Low tissue specificity"/>
</dbReference>
<dbReference type="MalaCards" id="FAM20C"/>
<dbReference type="MIM" id="259775">
    <property type="type" value="phenotype"/>
</dbReference>
<dbReference type="MIM" id="611061">
    <property type="type" value="gene"/>
</dbReference>
<dbReference type="neXtProt" id="NX_Q8IXL6"/>
<dbReference type="OpenTargets" id="ENSG00000177706"/>
<dbReference type="Orphanet" id="1832">
    <property type="disease" value="Osteosclerotic bone dysplasia"/>
</dbReference>
<dbReference type="PharmGKB" id="PA134898453"/>
<dbReference type="VEuPathDB" id="HostDB:ENSG00000177706"/>
<dbReference type="eggNOG" id="KOG3829">
    <property type="taxonomic scope" value="Eukaryota"/>
</dbReference>
<dbReference type="GeneTree" id="ENSGT00950000182951"/>
<dbReference type="HOGENOM" id="CLU_028926_2_0_1"/>
<dbReference type="InParanoid" id="Q8IXL6"/>
<dbReference type="OMA" id="AAENQDW"/>
<dbReference type="OrthoDB" id="8583677at2759"/>
<dbReference type="PAN-GO" id="Q8IXL6">
    <property type="GO annotations" value="3 GO annotations based on evolutionary models"/>
</dbReference>
<dbReference type="PhylomeDB" id="Q8IXL6"/>
<dbReference type="TreeFam" id="TF313276"/>
<dbReference type="PathwayCommons" id="Q8IXL6"/>
<dbReference type="Reactome" id="R-HSA-381426">
    <property type="pathway name" value="Regulation of Insulin-like Growth Factor (IGF) transport and uptake by Insulin-like Growth Factor Binding Proteins (IGFBPs)"/>
</dbReference>
<dbReference type="Reactome" id="R-HSA-8957275">
    <property type="pathway name" value="Post-translational protein phosphorylation"/>
</dbReference>
<dbReference type="SABIO-RK" id="Q8IXL6"/>
<dbReference type="SignaLink" id="Q8IXL6"/>
<dbReference type="SIGNOR" id="Q8IXL6"/>
<dbReference type="BioGRID-ORCS" id="56975">
    <property type="hits" value="16 hits in 1160 CRISPR screens"/>
</dbReference>
<dbReference type="GeneWiki" id="FAM20C"/>
<dbReference type="GenomeRNAi" id="56975"/>
<dbReference type="Pharos" id="Q8IXL6">
    <property type="development level" value="Tbio"/>
</dbReference>
<dbReference type="PRO" id="PR:Q8IXL6"/>
<dbReference type="Proteomes" id="UP000005640">
    <property type="component" value="Chromosome 7"/>
</dbReference>
<dbReference type="RNAct" id="Q8IXL6">
    <property type="molecule type" value="protein"/>
</dbReference>
<dbReference type="Bgee" id="ENSG00000177706">
    <property type="expression patterns" value="Expressed in right lobe of liver and 99 other cell types or tissues"/>
</dbReference>
<dbReference type="GO" id="GO:0005788">
    <property type="term" value="C:endoplasmic reticulum lumen"/>
    <property type="evidence" value="ECO:0000304"/>
    <property type="project" value="Reactome"/>
</dbReference>
<dbReference type="GO" id="GO:0070062">
    <property type="term" value="C:extracellular exosome"/>
    <property type="evidence" value="ECO:0007005"/>
    <property type="project" value="UniProtKB"/>
</dbReference>
<dbReference type="GO" id="GO:0005615">
    <property type="term" value="C:extracellular space"/>
    <property type="evidence" value="ECO:0000314"/>
    <property type="project" value="UniProtKB"/>
</dbReference>
<dbReference type="GO" id="GO:0005794">
    <property type="term" value="C:Golgi apparatus"/>
    <property type="evidence" value="ECO:0000314"/>
    <property type="project" value="HPA"/>
</dbReference>
<dbReference type="GO" id="GO:0000139">
    <property type="term" value="C:Golgi membrane"/>
    <property type="evidence" value="ECO:0000314"/>
    <property type="project" value="UniProtKB"/>
</dbReference>
<dbReference type="GO" id="GO:0005654">
    <property type="term" value="C:nucleoplasm"/>
    <property type="evidence" value="ECO:0000314"/>
    <property type="project" value="HPA"/>
</dbReference>
<dbReference type="GO" id="GO:0005524">
    <property type="term" value="F:ATP binding"/>
    <property type="evidence" value="ECO:0007669"/>
    <property type="project" value="UniProtKB-KW"/>
</dbReference>
<dbReference type="GO" id="GO:0005509">
    <property type="term" value="F:calcium ion binding"/>
    <property type="evidence" value="ECO:0007669"/>
    <property type="project" value="Ensembl"/>
</dbReference>
<dbReference type="GO" id="GO:0030145">
    <property type="term" value="F:manganese ion binding"/>
    <property type="evidence" value="ECO:0000314"/>
    <property type="project" value="UniProtKB"/>
</dbReference>
<dbReference type="GO" id="GO:0002020">
    <property type="term" value="F:protease binding"/>
    <property type="evidence" value="ECO:0000353"/>
    <property type="project" value="UniProtKB"/>
</dbReference>
<dbReference type="GO" id="GO:0004672">
    <property type="term" value="F:protein kinase activity"/>
    <property type="evidence" value="ECO:0000314"/>
    <property type="project" value="UniProtKB"/>
</dbReference>
<dbReference type="GO" id="GO:0106310">
    <property type="term" value="F:protein serine kinase activity"/>
    <property type="evidence" value="ECO:0007669"/>
    <property type="project" value="RHEA"/>
</dbReference>
<dbReference type="GO" id="GO:0004674">
    <property type="term" value="F:protein serine/threonine kinase activity"/>
    <property type="evidence" value="ECO:0000314"/>
    <property type="project" value="UniProtKB"/>
</dbReference>
<dbReference type="GO" id="GO:0031214">
    <property type="term" value="P:biomineral tissue development"/>
    <property type="evidence" value="ECO:0000315"/>
    <property type="project" value="UniProtKB"/>
</dbReference>
<dbReference type="GO" id="GO:0097187">
    <property type="term" value="P:dentinogenesis"/>
    <property type="evidence" value="ECO:0007669"/>
    <property type="project" value="Ensembl"/>
</dbReference>
<dbReference type="GO" id="GO:0070166">
    <property type="term" value="P:enamel mineralization"/>
    <property type="evidence" value="ECO:0000318"/>
    <property type="project" value="GO_Central"/>
</dbReference>
<dbReference type="GO" id="GO:0071895">
    <property type="term" value="P:odontoblast differentiation"/>
    <property type="evidence" value="ECO:0007669"/>
    <property type="project" value="Ensembl"/>
</dbReference>
<dbReference type="GO" id="GO:0036179">
    <property type="term" value="P:osteoclast maturation"/>
    <property type="evidence" value="ECO:0007669"/>
    <property type="project" value="Ensembl"/>
</dbReference>
<dbReference type="GO" id="GO:0030501">
    <property type="term" value="P:positive regulation of bone mineralization"/>
    <property type="evidence" value="ECO:0007669"/>
    <property type="project" value="Ensembl"/>
</dbReference>
<dbReference type="GO" id="GO:0045669">
    <property type="term" value="P:positive regulation of osteoblast differentiation"/>
    <property type="evidence" value="ECO:0007669"/>
    <property type="project" value="Ensembl"/>
</dbReference>
<dbReference type="GO" id="GO:0043687">
    <property type="term" value="P:post-translational protein modification"/>
    <property type="evidence" value="ECO:0000304"/>
    <property type="project" value="Reactome"/>
</dbReference>
<dbReference type="GO" id="GO:0006468">
    <property type="term" value="P:protein phosphorylation"/>
    <property type="evidence" value="ECO:0000314"/>
    <property type="project" value="UniProtKB"/>
</dbReference>
<dbReference type="GO" id="GO:0040036">
    <property type="term" value="P:regulation of fibroblast growth factor receptor signaling pathway"/>
    <property type="evidence" value="ECO:0007669"/>
    <property type="project" value="Ensembl"/>
</dbReference>
<dbReference type="GO" id="GO:0051174">
    <property type="term" value="P:regulation of phosphorus metabolic process"/>
    <property type="evidence" value="ECO:0007669"/>
    <property type="project" value="Ensembl"/>
</dbReference>
<dbReference type="CDD" id="cd10471">
    <property type="entry name" value="FAM20C_C"/>
    <property type="match status" value="1"/>
</dbReference>
<dbReference type="InterPro" id="IPR024869">
    <property type="entry name" value="FAM20"/>
</dbReference>
<dbReference type="InterPro" id="IPR009581">
    <property type="entry name" value="FAM20_C"/>
</dbReference>
<dbReference type="PANTHER" id="PTHR12450">
    <property type="entry name" value="DENTIN MATRIX PROTEIN 4 PROTEIN FAM20"/>
    <property type="match status" value="1"/>
</dbReference>
<dbReference type="PANTHER" id="PTHR12450:SF11">
    <property type="entry name" value="EXTRACELLULAR SERINE_THREONINE PROTEIN KINASE FAM20C"/>
    <property type="match status" value="1"/>
</dbReference>
<dbReference type="Pfam" id="PF06702">
    <property type="entry name" value="Fam20C"/>
    <property type="match status" value="1"/>
</dbReference>
<feature type="propeptide" id="PRO_0000433883" evidence="11 14">
    <location>
        <begin position="1"/>
        <end position="92"/>
    </location>
</feature>
<feature type="chain" id="PRO_0000008747" description="Extracellular serine/threonine protein kinase FAM20C">
    <location>
        <begin position="93"/>
        <end position="584"/>
    </location>
</feature>
<feature type="topological domain" description="Cytoplasmic" evidence="17">
    <location>
        <begin position="1"/>
        <end position="10"/>
    </location>
</feature>
<feature type="transmembrane region" description="Helical; Signal-anchor for type II membrane protein" evidence="3">
    <location>
        <begin position="11"/>
        <end position="31"/>
    </location>
</feature>
<feature type="topological domain" description="Lumenal" evidence="17">
    <location>
        <begin position="32"/>
        <end position="584"/>
    </location>
</feature>
<feature type="region of interest" description="Disordered" evidence="4">
    <location>
        <begin position="62"/>
        <end position="81"/>
    </location>
</feature>
<feature type="region of interest" description="Disordered" evidence="4">
    <location>
        <begin position="94"/>
        <end position="159"/>
    </location>
</feature>
<feature type="region of interest" description="Kinase domain" evidence="18">
    <location>
        <begin position="354"/>
        <end position="565"/>
    </location>
</feature>
<feature type="compositionally biased region" description="Low complexity" evidence="4">
    <location>
        <begin position="71"/>
        <end position="81"/>
    </location>
</feature>
<feature type="compositionally biased region" description="Low complexity" evidence="4">
    <location>
        <begin position="95"/>
        <end position="112"/>
    </location>
</feature>
<feature type="compositionally biased region" description="Basic and acidic residues" evidence="4">
    <location>
        <begin position="116"/>
        <end position="149"/>
    </location>
</feature>
<feature type="active site" evidence="9">
    <location>
        <position position="458"/>
    </location>
</feature>
<feature type="binding site" evidence="2">
    <location>
        <position position="269"/>
    </location>
    <ligand>
        <name>ATP</name>
        <dbReference type="ChEBI" id="CHEBI:30616"/>
    </ligand>
</feature>
<feature type="binding site" evidence="2">
    <location>
        <position position="285"/>
    </location>
    <ligand>
        <name>ATP</name>
        <dbReference type="ChEBI" id="CHEBI:30616"/>
    </ligand>
</feature>
<feature type="binding site" evidence="2">
    <location>
        <position position="306"/>
    </location>
    <ligand>
        <name>ATP</name>
        <dbReference type="ChEBI" id="CHEBI:30616"/>
    </ligand>
</feature>
<feature type="binding site" evidence="2">
    <location>
        <position position="306"/>
    </location>
    <ligand>
        <name>Mn(2+)</name>
        <dbReference type="ChEBI" id="CHEBI:29035"/>
    </ligand>
</feature>
<feature type="binding site" evidence="2">
    <location>
        <begin position="389"/>
        <end position="392"/>
    </location>
    <ligand>
        <name>ATP</name>
        <dbReference type="ChEBI" id="CHEBI:30616"/>
    </ligand>
</feature>
<feature type="binding site" evidence="2">
    <location>
        <position position="463"/>
    </location>
    <ligand>
        <name>ATP</name>
        <dbReference type="ChEBI" id="CHEBI:30616"/>
    </ligand>
</feature>
<feature type="binding site" evidence="2">
    <location>
        <position position="478"/>
    </location>
    <ligand>
        <name>ATP</name>
        <dbReference type="ChEBI" id="CHEBI:30616"/>
    </ligand>
</feature>
<feature type="binding site" evidence="18">
    <location>
        <position position="478"/>
    </location>
    <ligand>
        <name>Mn(2+)</name>
        <dbReference type="ChEBI" id="CHEBI:29035"/>
    </ligand>
</feature>
<feature type="site" description="Cleavage; by MBTPS1" evidence="14">
    <location>
        <begin position="92"/>
        <end position="93"/>
    </location>
</feature>
<feature type="modified residue" description="Phosphoserine" evidence="14">
    <location>
        <position position="106"/>
    </location>
</feature>
<feature type="glycosylation site" description="N-linked (GlcNAc...) asparagine" evidence="11">
    <location>
        <position position="101"/>
    </location>
</feature>
<feature type="glycosylation site" description="N-linked (GlcNAc...) asparagine" evidence="11">
    <location>
        <position position="335"/>
    </location>
</feature>
<feature type="glycosylation site" description="N-linked (GlcNAc...) asparagine" evidence="7 11">
    <location>
        <position position="470"/>
    </location>
</feature>
<feature type="disulfide bond" description="Interchain" evidence="14">
    <location>
        <position position="46"/>
    </location>
</feature>
<feature type="disulfide bond" description="Interchain" evidence="14">
    <location>
        <position position="48"/>
    </location>
</feature>
<feature type="disulfide bond" evidence="2">
    <location>
        <begin position="362"/>
        <end position="378"/>
    </location>
</feature>
<feature type="disulfide bond" evidence="2">
    <location>
        <begin position="367"/>
        <end position="371"/>
    </location>
</feature>
<feature type="disulfide bond" evidence="2">
    <location>
        <begin position="426"/>
        <end position="500"/>
    </location>
</feature>
<feature type="disulfide bond" evidence="2">
    <location>
        <begin position="501"/>
        <end position="560"/>
    </location>
</feature>
<feature type="splice variant" id="VSP_040834" description="In isoform 2." evidence="15">
    <location>
        <begin position="1"/>
        <end position="332"/>
    </location>
</feature>
<feature type="sequence variant" id="VAR_073660" description="In RNS." evidence="8">
    <original>I</original>
    <variation>N</variation>
    <location>
        <position position="258"/>
    </location>
</feature>
<feature type="sequence variant" id="VAR_073661" description="In RNS; mild non-lethal form; decreased protein kinase activity; dbSNP:rs778899041." evidence="10">
    <original>T</original>
    <variation>M</variation>
    <location>
        <position position="268"/>
    </location>
</feature>
<feature type="sequence variant" id="VAR_073662" description="In RNS; dbSNP:rs779708323." evidence="8">
    <original>G</original>
    <variation>R</variation>
    <location>
        <position position="280"/>
    </location>
</feature>
<feature type="sequence variant" id="VAR_073663" description="In RNS; mild non-lethal form; decreased protein kinase activity; FAM20A is still able to increase remaining protein kinase activity; dbSNP:rs797044462." evidence="8 10">
    <original>P</original>
    <variation>S</variation>
    <location>
        <position position="328"/>
    </location>
</feature>
<feature type="sequence variant" id="VAR_037530" description="In RNS; dbSNP:rs796051852." evidence="6 8">
    <original>G</original>
    <variation>E</variation>
    <location>
        <position position="379"/>
    </location>
</feature>
<feature type="sequence variant" id="VAR_037531" description="In RNS." evidence="6 8">
    <original>G</original>
    <variation>R</variation>
    <location>
        <position position="379"/>
    </location>
</feature>
<feature type="sequence variant" id="VAR_037532" description="In RNS; dbSNP:rs796051849." evidence="6 8">
    <original>L</original>
    <variation>R</variation>
    <location>
        <position position="388"/>
    </location>
</feature>
<feature type="sequence variant" id="VAR_073664" description="In RNS; mild non-lethal form; decreased protein kinase activity." evidence="8">
    <original>D</original>
    <variation>N</variation>
    <location>
        <position position="451"/>
    </location>
</feature>
<feature type="sequence variant" id="VAR_037533" description="In RNS; dbSNP:rs796051850." evidence="6 8">
    <original>R</original>
    <variation>W</variation>
    <location>
        <position position="549"/>
    </location>
</feature>
<feature type="mutagenesis site" description="Loss of membrane localization with more efficient secretion and loss of propeptide cleavage. Reduced oligomerization." evidence="14">
    <original>DLLP</original>
    <variation>AAAA</variation>
    <location>
        <begin position="28"/>
        <end position="31"/>
    </location>
</feature>
<feature type="mutagenesis site" description="No effect on homodimer formation. Complete disruption of homodimer formation but no effect on secretion; when associated with S-48." evidence="14">
    <original>C</original>
    <variation>S</variation>
    <location>
        <position position="46"/>
    </location>
</feature>
<feature type="mutagenesis site" description="No effect on homodimer formation. Complete disruption of homodimer formation but no effect on secretion; when associated with S-46." evidence="14">
    <original>C</original>
    <variation>S</variation>
    <location>
        <position position="48"/>
    </location>
</feature>
<feature type="mutagenesis site" description="Impaired secretion. Loss of ability to promote osteoblast differentiation; when associated with A-92." evidence="14">
    <original>R</original>
    <variation>A</variation>
    <location>
        <position position="89"/>
    </location>
</feature>
<feature type="mutagenesis site" description="No effect on secretion." evidence="14">
    <original>I</original>
    <variation>A</variation>
    <location>
        <position position="90"/>
    </location>
</feature>
<feature type="mutagenesis site" description="No effect on secretion or activity." evidence="11">
    <original>LQD</original>
    <variation>AAA</variation>
    <location>
        <begin position="91"/>
        <end position="93"/>
    </location>
</feature>
<feature type="mutagenesis site" description="Impaired secretion." evidence="14">
    <original>L</original>
    <variation>S</variation>
    <location>
        <position position="91"/>
    </location>
</feature>
<feature type="mutagenesis site" description="Impaired secretion. Loss of ability to promote osteoblast differentiation; when associated with A-89." evidence="14">
    <original>Q</original>
    <variation>A</variation>
    <location>
        <position position="92"/>
    </location>
</feature>
<feature type="mutagenesis site" description="Impaired secretion; when associated with A-335 and A-470." evidence="11">
    <original>N</original>
    <variation>A</variation>
    <location>
        <position position="101"/>
    </location>
</feature>
<feature type="mutagenesis site" description="Abolishes phosphorylation." evidence="14">
    <original>S</original>
    <variation>A</variation>
    <location>
        <position position="106"/>
    </location>
</feature>
<feature type="mutagenesis site" description="Reduced kinase activity." evidence="9">
    <original>K</original>
    <variation>A</variation>
    <location>
        <position position="271"/>
    </location>
</feature>
<feature type="mutagenesis site" description="Reduced kinase activity." evidence="9">
    <original>K</original>
    <variation>A</variation>
    <location>
        <position position="285"/>
    </location>
</feature>
<feature type="mutagenesis site" description="Strongly reduced kinase activity." evidence="9 10">
    <original>E</original>
    <variation>A</variation>
    <variation>Q</variation>
    <location>
        <position position="306"/>
    </location>
</feature>
<feature type="mutagenesis site" description="Reduced kinase activity." evidence="9">
    <original>E</original>
    <variation>A</variation>
    <location>
        <position position="311"/>
    </location>
</feature>
<feature type="mutagenesis site" description="Impaired secretion; when associated with A-101 and A-470." evidence="11">
    <original>N</original>
    <variation>A</variation>
    <location>
        <position position="335"/>
    </location>
</feature>
<feature type="mutagenesis site" description="Reduced kinase activity." evidence="9">
    <original>R</original>
    <variation>A</variation>
    <location>
        <position position="408"/>
    </location>
</feature>
<feature type="mutagenesis site" description="Abrogates kinase activity." evidence="9">
    <original>D</original>
    <variation>A</variation>
    <location>
        <position position="458"/>
    </location>
</feature>
<feature type="mutagenesis site" description="Impaired secretion; when associated with A-101 and A-335." evidence="11">
    <original>N</original>
    <variation>A</variation>
    <location>
        <position position="470"/>
    </location>
</feature>
<feature type="mutagenesis site" description="Unable to bind manganese. Abrogates kinase activity. Loss of ERO1A phosphorylation. Loss of autophosphorylation. Loss of ability to promote osteoblast differentiation." evidence="8 9 10 11 12 14">
    <original>D</original>
    <variation>A</variation>
    <location>
        <position position="478"/>
    </location>
</feature>
<feature type="sequence conflict" description="In Ref. 6; CAB99089." evidence="17" ref="6">
    <original>MTFQNYGQALFKPMK</original>
    <variation>FLSDKPFLFLSCFLR</variation>
    <location>
        <begin position="274"/>
        <end position="288"/>
    </location>
</feature>
<feature type="sequence conflict" description="In Ref. 5; AAH87853 and 6; CAB99089." evidence="17" ref="5 6">
    <original>N</original>
    <variation>D</variation>
    <location>
        <position position="564"/>
    </location>
</feature>
<feature type="helix" evidence="21">
    <location>
        <begin position="160"/>
        <end position="164"/>
    </location>
</feature>
<feature type="helix" evidence="21">
    <location>
        <begin position="168"/>
        <end position="170"/>
    </location>
</feature>
<feature type="turn" evidence="21">
    <location>
        <begin position="179"/>
        <end position="181"/>
    </location>
</feature>
<feature type="strand" evidence="21">
    <location>
        <begin position="182"/>
        <end position="184"/>
    </location>
</feature>
<feature type="helix" evidence="21">
    <location>
        <begin position="225"/>
        <end position="231"/>
    </location>
</feature>
<feature type="strand" evidence="21">
    <location>
        <begin position="237"/>
        <end position="239"/>
    </location>
</feature>
<feature type="helix" evidence="21">
    <location>
        <begin position="244"/>
        <end position="255"/>
    </location>
</feature>
<feature type="strand" evidence="21">
    <location>
        <begin position="258"/>
        <end position="263"/>
    </location>
</feature>
<feature type="strand" evidence="21">
    <location>
        <begin position="272"/>
        <end position="276"/>
    </location>
</feature>
<feature type="strand" evidence="21">
    <location>
        <begin position="281"/>
        <end position="286"/>
    </location>
</feature>
<feature type="helix" evidence="21">
    <location>
        <begin position="301"/>
        <end position="303"/>
    </location>
</feature>
<feature type="helix" evidence="21">
    <location>
        <begin position="308"/>
        <end position="320"/>
    </location>
</feature>
<feature type="strand" evidence="21">
    <location>
        <begin position="329"/>
        <end position="335"/>
    </location>
</feature>
<feature type="turn" evidence="21">
    <location>
        <begin position="336"/>
        <end position="340"/>
    </location>
</feature>
<feature type="helix" evidence="21">
    <location>
        <begin position="341"/>
        <end position="343"/>
    </location>
</feature>
<feature type="helix" evidence="21">
    <location>
        <begin position="347"/>
        <end position="350"/>
    </location>
</feature>
<feature type="strand" evidence="21">
    <location>
        <begin position="361"/>
        <end position="363"/>
    </location>
</feature>
<feature type="strand" evidence="21">
    <location>
        <begin position="368"/>
        <end position="370"/>
    </location>
</feature>
<feature type="helix" evidence="21">
    <location>
        <begin position="373"/>
        <end position="375"/>
    </location>
</feature>
<feature type="strand" evidence="21">
    <location>
        <begin position="380"/>
        <end position="390"/>
    </location>
</feature>
<feature type="turn" evidence="21">
    <location>
        <begin position="419"/>
        <end position="421"/>
    </location>
</feature>
<feature type="turn" evidence="21">
    <location>
        <begin position="423"/>
        <end position="425"/>
    </location>
</feature>
<feature type="helix" evidence="21">
    <location>
        <begin position="426"/>
        <end position="429"/>
    </location>
</feature>
<feature type="turn" evidence="21">
    <location>
        <begin position="433"/>
        <end position="436"/>
    </location>
</feature>
<feature type="helix" evidence="21">
    <location>
        <begin position="438"/>
        <end position="454"/>
    </location>
</feature>
<feature type="strand" evidence="21">
    <location>
        <begin position="461"/>
        <end position="463"/>
    </location>
</feature>
<feature type="turn" evidence="21">
    <location>
        <begin position="467"/>
        <end position="470"/>
    </location>
</feature>
<feature type="helix" evidence="21">
    <location>
        <begin position="491"/>
        <end position="494"/>
    </location>
</feature>
<feature type="helix" evidence="21">
    <location>
        <begin position="495"/>
        <end position="500"/>
    </location>
</feature>
<feature type="helix" evidence="21">
    <location>
        <begin position="505"/>
        <end position="513"/>
    </location>
</feature>
<feature type="helix" evidence="21">
    <location>
        <begin position="517"/>
        <end position="519"/>
    </location>
</feature>
<feature type="helix" evidence="21">
    <location>
        <begin position="521"/>
        <end position="528"/>
    </location>
</feature>
<feature type="strand" evidence="21">
    <location>
        <begin position="530"/>
        <end position="534"/>
    </location>
</feature>
<feature type="helix" evidence="21">
    <location>
        <begin position="540"/>
        <end position="564"/>
    </location>
</feature>
<feature type="turn" evidence="21">
    <location>
        <begin position="567"/>
        <end position="569"/>
    </location>
</feature>
<organism>
    <name type="scientific">Homo sapiens</name>
    <name type="common">Human</name>
    <dbReference type="NCBI Taxonomy" id="9606"/>
    <lineage>
        <taxon>Eukaryota</taxon>
        <taxon>Metazoa</taxon>
        <taxon>Chordata</taxon>
        <taxon>Craniata</taxon>
        <taxon>Vertebrata</taxon>
        <taxon>Euteleostomi</taxon>
        <taxon>Mammalia</taxon>
        <taxon>Eutheria</taxon>
        <taxon>Euarchontoglires</taxon>
        <taxon>Primates</taxon>
        <taxon>Haplorrhini</taxon>
        <taxon>Catarrhini</taxon>
        <taxon>Hominidae</taxon>
        <taxon>Homo</taxon>
    </lineage>
</organism>
<sequence length="584" mass="66234">MKMMLVRRFRVLILMVFLVACALHIALDLLPRLERRGARPSGEPGCSCAQPAAEVAAPGWAQVRGRPGEPPAASSAAGDAGWPNKHTLRILQDFSSDPSSNLSSHSLEKLPPAAEPAERALRGRDPGALRPHDPAHRPLLRDPGPRRSESPPGPGGDASLLARLFEHPLYRVAVPPLTEEDVLFNVNSDTRLSPKAAENPDWPHAGAEGAEFLSPGEAAVDSYPNWLKFHIGINRYELYSRHNPAIEALLHDLSSQRITSVAMKSGGTQLKLIMTFQNYGQALFKPMKQTREQETPPDFFYFSDYERHNAEIAAFHLDRILDFRRVPPVAGRMVNMTKEIRDVTRDKKLWRTFFISPANNICFYGECSYYCSTEHALCGKPDQIEGSLAAFLPDLSLAKRKTWRNPWRRSYHKRKKAEWEVDPDYCEEVKQTPPYDSSHRILDVMDMTIFDFLMGNMDRHHYETFEKFGNETFIIHLDNGRGFGKYSHDELSILVPLQQCCRIRKSTYLRLQLLAKEEYKLSLLMAESLRGDQVAPVLYQPHLEALDRRLRVVLKAVRDCVERNGLHSVVDDDLDTEHRAASAR</sequence>
<name>FA20C_HUMAN</name>
<protein>
    <recommendedName>
        <fullName evidence="17">Extracellular serine/threonine protein kinase FAM20C</fullName>
        <ecNumber evidence="8 9 10 12 13 14">2.7.11.1</ecNumber>
    </recommendedName>
    <alternativeName>
        <fullName evidence="1">Dentin matrix protein 4</fullName>
        <shortName evidence="1">DMP-4</shortName>
    </alternativeName>
    <alternativeName>
        <fullName evidence="16">Golgi casein kinase</fullName>
    </alternativeName>
    <alternativeName>
        <fullName evidence="16">Golgi-enriched fraction casein kinase</fullName>
        <shortName evidence="16">GEF-CK</shortName>
    </alternativeName>
</protein>
<comment type="function">
    <text evidence="8 9 10 11 12 13 14">Golgi serine/threonine protein kinase that phosphorylates secretory pathway proteins within Ser-x-Glu/pSer motifs and plays a key role in biomineralization of bones and teeth (PubMed:22582013, PubMed:23754375, PubMed:25789606). Constitutes the main protein kinase for extracellular proteins, generating the majority of the extracellular phosphoproteome (PubMed:26091039). Mainly phosphorylates proteins within the Ser-x-Glu/pSer motif, but also displays a broader substrate specificity (PubMed:26091039). Phosphorylates ERO1A, enhancing its activity which is required to maintain endoplasmic reticulum redox homeostasis and for oxidative protein folding (PubMed:29858230, PubMed:34349020). During endoplasmic reticulum stress, phosphorylates P4HB/PDIA1 which induces a functional switch, causing P4HB to change from an oxidoreductase to a molecular chaperone (PubMed:32149426). This is critical to maintain ER proteostasis and reduce cell death under ER stress (PubMed:32149426). Phosphorylation of P4HB also promotes its interaction with ERN1, leading to reduced activity of ERN1, a key sensor for the endoplasmic reticulum unfolded protein response (PubMed:32149426). Required for osteoblast differentiation and mineralization (PubMed:34349020). Phosphorylates casein as well as a number of proteins involved in biomineralization such as AMELX, AMTN, ENAM and SPP1/OPN (PubMed:22582013, PubMed:25789606, PubMed:34349020). In addition to its role in biomineralization, also plays a role in lipid homeostasis, wound healing and cell migration and adhesion (PubMed:26091039).</text>
</comment>
<comment type="catalytic activity">
    <reaction evidence="8 9 10 12 13 14">
        <text>L-seryl-[protein] + ATP = O-phospho-L-seryl-[protein] + ADP + H(+)</text>
        <dbReference type="Rhea" id="RHEA:17989"/>
        <dbReference type="Rhea" id="RHEA-COMP:9863"/>
        <dbReference type="Rhea" id="RHEA-COMP:11604"/>
        <dbReference type="ChEBI" id="CHEBI:15378"/>
        <dbReference type="ChEBI" id="CHEBI:29999"/>
        <dbReference type="ChEBI" id="CHEBI:30616"/>
        <dbReference type="ChEBI" id="CHEBI:83421"/>
        <dbReference type="ChEBI" id="CHEBI:456216"/>
        <dbReference type="EC" id="2.7.11.1"/>
    </reaction>
</comment>
<comment type="catalytic activity">
    <reaction evidence="8 9 10">
        <text>L-threonyl-[protein] + ATP = O-phospho-L-threonyl-[protein] + ADP + H(+)</text>
        <dbReference type="Rhea" id="RHEA:46608"/>
        <dbReference type="Rhea" id="RHEA-COMP:11060"/>
        <dbReference type="Rhea" id="RHEA-COMP:11605"/>
        <dbReference type="ChEBI" id="CHEBI:15378"/>
        <dbReference type="ChEBI" id="CHEBI:30013"/>
        <dbReference type="ChEBI" id="CHEBI:30616"/>
        <dbReference type="ChEBI" id="CHEBI:61977"/>
        <dbReference type="ChEBI" id="CHEBI:456216"/>
        <dbReference type="EC" id="2.7.11.1"/>
    </reaction>
</comment>
<comment type="cofactor">
    <cofactor evidence="9 18">
        <name>Mn(2+)</name>
        <dbReference type="ChEBI" id="CHEBI:29035"/>
    </cofactor>
</comment>
<comment type="activity regulation">
    <text evidence="10">Serine/threonine protein kinase activity is increased upon interaction with FAM20A.</text>
</comment>
<comment type="biophysicochemical properties">
    <kinetics>
        <KM evidence="9">0.8 uM for manganese/ATP</KM>
    </kinetics>
</comment>
<comment type="subunit">
    <text evidence="10 14">Homodimer; disulfide-linked (PubMed:34349020). Interacts with FAM20A; probably forming a heterotetramer of 2 subunits of FAM20A and 2 subunits of FAM20C (PubMed:25789606). Interacts with protease MBTPS1/S1P; the interaction results in FAM20C cleavage and secretion (PubMed:34349020). Interacts with COPII components SEC23A and SEC24A; transport of FAM20C from the endoplasmic reticulum to the Golgi is likely to be mediated by COPII vesicles (PubMed:34349020).</text>
</comment>
<comment type="interaction">
    <interactant intactId="EBI-7147442">
        <id>Q8IXL6</id>
    </interactant>
    <interactant intactId="EBI-11893530">
        <id>Q9NP70</id>
        <label>AMBN</label>
    </interactant>
    <organismsDiffer>false</organismsDiffer>
    <experiments>2</experiments>
</comment>
<comment type="interaction">
    <interactant intactId="EBI-7147442">
        <id>Q8IXL6</id>
    </interactant>
    <interactant intactId="EBI-11892684">
        <id>Q6UX39</id>
        <label>AMTN</label>
    </interactant>
    <organismsDiffer>false</organismsDiffer>
    <experiments>2</experiments>
</comment>
<comment type="interaction">
    <interactant intactId="EBI-7147442">
        <id>Q8IXL6</id>
    </interactant>
    <interactant intactId="EBI-1221934">
        <id>O14791</id>
        <label>APOL1</label>
    </interactant>
    <organismsDiffer>false</organismsDiffer>
    <experiments>2</experiments>
</comment>
<comment type="interaction">
    <interactant intactId="EBI-7147442">
        <id>Q8IXL6</id>
    </interactant>
    <interactant intactId="EBI-712619">
        <id>P05060</id>
        <label>CHGB</label>
    </interactant>
    <organismsDiffer>false</organismsDiffer>
    <experiments>2</experiments>
</comment>
<comment type="interaction">
    <interactant intactId="EBI-7147442">
        <id>Q8IXL6</id>
    </interactant>
    <interactant intactId="EBI-11892601">
        <id>Q9NRM1</id>
        <label>ENAM</label>
    </interactant>
    <organismsDiffer>false</organismsDiffer>
    <experiments>2</experiments>
</comment>
<comment type="interaction">
    <interactant intactId="EBI-7147442">
        <id>Q8IXL6</id>
    </interactant>
    <interactant intactId="EBI-11892970">
        <id>Q96MK3</id>
        <label>FAM20A</label>
    </interactant>
    <organismsDiffer>false</organismsDiffer>
    <experiments>3</experiments>
</comment>
<comment type="interaction">
    <interactant intactId="EBI-7147442">
        <id>Q8IXL6</id>
    </interactant>
    <interactant intactId="EBI-348571">
        <id>P02671</id>
        <label>FGA</label>
    </interactant>
    <organismsDiffer>false</organismsDiffer>
    <experiments>2</experiments>
</comment>
<comment type="interaction">
    <interactant intactId="EBI-7147442">
        <id>Q8IXL6</id>
    </interactant>
    <interactant intactId="EBI-13646303">
        <id>P08833</id>
        <label>IGFBP1</label>
    </interactant>
    <organismsDiffer>false</organismsDiffer>
    <experiments>2</experiments>
</comment>
<comment type="interaction">
    <interactant intactId="EBI-7147442">
        <id>Q8IXL6</id>
    </interactant>
    <interactant intactId="EBI-738601">
        <id>P02810</id>
        <label>PRH2</label>
    </interactant>
    <organismsDiffer>false</organismsDiffer>
    <experiments>2</experiments>
</comment>
<comment type="interaction">
    <interactant intactId="EBI-7147442">
        <id>Q8IXL6</id>
    </interactant>
    <interactant intactId="EBI-1039832">
        <id>P01008</id>
        <label>SERPINC1</label>
    </interactant>
    <organismsDiffer>false</organismsDiffer>
    <experiments>2</experiments>
</comment>
<comment type="interaction">
    <interactant intactId="EBI-7147442">
        <id>Q8IXL6</id>
    </interactant>
    <interactant intactId="EBI-723648">
        <id>P10451</id>
        <label>SPP1</label>
    </interactant>
    <organismsDiffer>false</organismsDiffer>
    <experiments>3</experiments>
</comment>
<comment type="interaction">
    <interactant intactId="EBI-7147442">
        <id>Q8IXL6</id>
    </interactant>
    <interactant intactId="EBI-11893188">
        <id>PRO_0000020321</id>
        <label>SPP1</label>
        <dbReference type="UniProtKB" id="P10451"/>
    </interactant>
    <organismsDiffer>false</organismsDiffer>
    <experiments>2</experiments>
</comment>
<comment type="interaction">
    <interactant intactId="EBI-7147442">
        <id>Q8IXL6</id>
    </interactant>
    <interactant intactId="EBI-5260183">
        <id>P02666</id>
        <label>CSN2</label>
    </interactant>
    <organismsDiffer>true</organismsDiffer>
    <experiments>3</experiments>
</comment>
<comment type="subcellular location">
    <subcellularLocation>
        <location evidence="13 14">Golgi apparatus membrane</location>
        <topology evidence="14">Single-pass type II membrane protein</topology>
    </subcellularLocation>
    <subcellularLocation>
        <location evidence="11">Secreted</location>
    </subcellularLocation>
    <subcellularLocation>
        <location evidence="13">Endoplasmic reticulum</location>
    </subcellularLocation>
    <text evidence="13 14">Resides in the Golgi apparatus membrane and is secreted following propeptide cleavage (PubMed:34349020). Retained in the endoplasmic reticulum (ER) in response to ER stress where it phosphorylates P4HB (PubMed:32149426).</text>
</comment>
<comment type="alternative products">
    <event type="alternative splicing"/>
    <isoform>
        <id>Q8IXL6-1</id>
        <name>1</name>
        <sequence type="displayed"/>
    </isoform>
    <isoform>
        <id>Q8IXL6-2</id>
        <name>2</name>
        <sequence type="described" ref="VSP_040834"/>
    </isoform>
</comment>
<comment type="tissue specificity">
    <text evidence="5">Widely expressed.</text>
</comment>
<comment type="PTM">
    <text evidence="19">N-glycosylation is required for folding.</text>
</comment>
<comment type="PTM">
    <text evidence="11 14">Autophosphorylated.</text>
</comment>
<comment type="PTM">
    <text evidence="14">Propeptide cleavage by MBTPS1/S1P promotes FAM20C secretion and maximal kinase activity which is essential for efficient osteoblast differentiation and biomineralization.</text>
</comment>
<comment type="disease" evidence="6 8 10">
    <disease id="DI-02244">
        <name>Raine syndrome</name>
        <acronym>RNS</acronym>
        <description>An autosomal recessive osteosclerotic bone dysplasia with neonatal lethal outcome, although some patients survive into childhood. Clinical features include generalized increase in the density of all bones and a marked increase in the ossification of the skull, craniofacial dysplasia and microcephaly.</description>
        <dbReference type="MIM" id="259775"/>
    </disease>
    <text>The disease is caused by variants affecting the gene represented in this entry.</text>
</comment>
<comment type="similarity">
    <text evidence="17">Belongs to the FAM20 family.</text>
</comment>
<comment type="sequence caution" evidence="17">
    <conflict type="erroneous initiation">
        <sequence resource="EMBL-CDS" id="AAH40074"/>
    </conflict>
    <text>Truncated N-terminus.</text>
</comment>
<comment type="sequence caution" evidence="17">
    <conflict type="erroneous initiation">
        <sequence resource="EMBL-CDS" id="EAL23705"/>
    </conflict>
    <text>Truncated N-terminus.</text>
</comment>
<reference key="1">
    <citation type="submission" date="2002-07" db="EMBL/GenBank/DDBJ databases">
        <authorList>
            <person name="Wu C."/>
            <person name="Ding P."/>
            <person name="Han W."/>
            <person name="Rui M."/>
            <person name="Wang Y."/>
            <person name="Song Q."/>
            <person name="Ma D."/>
        </authorList>
    </citation>
    <scope>NUCLEOTIDE SEQUENCE [MRNA] (ISOFORM 1)</scope>
    <source>
        <tissue>Brain</tissue>
    </source>
</reference>
<reference key="2">
    <citation type="submission" date="2010-02" db="EMBL/GenBank/DDBJ databases">
        <title>Molecular cloning and characterization of a novel xylosylkinase.</title>
        <authorList>
            <person name="Kitagawa H."/>
            <person name="Izumikawa T."/>
            <person name="Koike T."/>
        </authorList>
    </citation>
    <scope>NUCLEOTIDE SEQUENCE [MRNA]</scope>
</reference>
<reference key="3">
    <citation type="journal article" date="2003" name="Nature">
        <title>The DNA sequence of human chromosome 7.</title>
        <authorList>
            <person name="Hillier L.W."/>
            <person name="Fulton R.S."/>
            <person name="Fulton L.A."/>
            <person name="Graves T.A."/>
            <person name="Pepin K.H."/>
            <person name="Wagner-McPherson C."/>
            <person name="Layman D."/>
            <person name="Maas J."/>
            <person name="Jaeger S."/>
            <person name="Walker R."/>
            <person name="Wylie K."/>
            <person name="Sekhon M."/>
            <person name="Becker M.C."/>
            <person name="O'Laughlin M.D."/>
            <person name="Schaller M.E."/>
            <person name="Fewell G.A."/>
            <person name="Delehaunty K.D."/>
            <person name="Miner T.L."/>
            <person name="Nash W.E."/>
            <person name="Cordes M."/>
            <person name="Du H."/>
            <person name="Sun H."/>
            <person name="Edwards J."/>
            <person name="Bradshaw-Cordum H."/>
            <person name="Ali J."/>
            <person name="Andrews S."/>
            <person name="Isak A."/>
            <person name="Vanbrunt A."/>
            <person name="Nguyen C."/>
            <person name="Du F."/>
            <person name="Lamar B."/>
            <person name="Courtney L."/>
            <person name="Kalicki J."/>
            <person name="Ozersky P."/>
            <person name="Bielicki L."/>
            <person name="Scott K."/>
            <person name="Holmes A."/>
            <person name="Harkins R."/>
            <person name="Harris A."/>
            <person name="Strong C.M."/>
            <person name="Hou S."/>
            <person name="Tomlinson C."/>
            <person name="Dauphin-Kohlberg S."/>
            <person name="Kozlowicz-Reilly A."/>
            <person name="Leonard S."/>
            <person name="Rohlfing T."/>
            <person name="Rock S.M."/>
            <person name="Tin-Wollam A.-M."/>
            <person name="Abbott A."/>
            <person name="Minx P."/>
            <person name="Maupin R."/>
            <person name="Strowmatt C."/>
            <person name="Latreille P."/>
            <person name="Miller N."/>
            <person name="Johnson D."/>
            <person name="Murray J."/>
            <person name="Woessner J.P."/>
            <person name="Wendl M.C."/>
            <person name="Yang S.-P."/>
            <person name="Schultz B.R."/>
            <person name="Wallis J.W."/>
            <person name="Spieth J."/>
            <person name="Bieri T.A."/>
            <person name="Nelson J.O."/>
            <person name="Berkowicz N."/>
            <person name="Wohldmann P.E."/>
            <person name="Cook L.L."/>
            <person name="Hickenbotham M.T."/>
            <person name="Eldred J."/>
            <person name="Williams D."/>
            <person name="Bedell J.A."/>
            <person name="Mardis E.R."/>
            <person name="Clifton S.W."/>
            <person name="Chissoe S.L."/>
            <person name="Marra M.A."/>
            <person name="Raymond C."/>
            <person name="Haugen E."/>
            <person name="Gillett W."/>
            <person name="Zhou Y."/>
            <person name="James R."/>
            <person name="Phelps K."/>
            <person name="Iadanoto S."/>
            <person name="Bubb K."/>
            <person name="Simms E."/>
            <person name="Levy R."/>
            <person name="Clendenning J."/>
            <person name="Kaul R."/>
            <person name="Kent W.J."/>
            <person name="Furey T.S."/>
            <person name="Baertsch R.A."/>
            <person name="Brent M.R."/>
            <person name="Keibler E."/>
            <person name="Flicek P."/>
            <person name="Bork P."/>
            <person name="Suyama M."/>
            <person name="Bailey J.A."/>
            <person name="Portnoy M.E."/>
            <person name="Torrents D."/>
            <person name="Chinwalla A.T."/>
            <person name="Gish W.R."/>
            <person name="Eddy S.R."/>
            <person name="McPherson J.D."/>
            <person name="Olson M.V."/>
            <person name="Eichler E.E."/>
            <person name="Green E.D."/>
            <person name="Waterston R.H."/>
            <person name="Wilson R.K."/>
        </authorList>
    </citation>
    <scope>NUCLEOTIDE SEQUENCE [LARGE SCALE GENOMIC DNA]</scope>
</reference>
<reference key="4">
    <citation type="journal article" date="2003" name="Science">
        <title>Human chromosome 7: DNA sequence and biology.</title>
        <authorList>
            <person name="Scherer S.W."/>
            <person name="Cheung J."/>
            <person name="MacDonald J.R."/>
            <person name="Osborne L.R."/>
            <person name="Nakabayashi K."/>
            <person name="Herbrick J.-A."/>
            <person name="Carson A.R."/>
            <person name="Parker-Katiraee L."/>
            <person name="Skaug J."/>
            <person name="Khaja R."/>
            <person name="Zhang J."/>
            <person name="Hudek A.K."/>
            <person name="Li M."/>
            <person name="Haddad M."/>
            <person name="Duggan G.E."/>
            <person name="Fernandez B.A."/>
            <person name="Kanematsu E."/>
            <person name="Gentles S."/>
            <person name="Christopoulos C.C."/>
            <person name="Choufani S."/>
            <person name="Kwasnicka D."/>
            <person name="Zheng X.H."/>
            <person name="Lai Z."/>
            <person name="Nusskern D.R."/>
            <person name="Zhang Q."/>
            <person name="Gu Z."/>
            <person name="Lu F."/>
            <person name="Zeesman S."/>
            <person name="Nowaczyk M.J."/>
            <person name="Teshima I."/>
            <person name="Chitayat D."/>
            <person name="Shuman C."/>
            <person name="Weksberg R."/>
            <person name="Zackai E.H."/>
            <person name="Grebe T.A."/>
            <person name="Cox S.R."/>
            <person name="Kirkpatrick S.J."/>
            <person name="Rahman N."/>
            <person name="Friedman J.M."/>
            <person name="Heng H.H.Q."/>
            <person name="Pelicci P.G."/>
            <person name="Lo-Coco F."/>
            <person name="Belloni E."/>
            <person name="Shaffer L.G."/>
            <person name="Pober B."/>
            <person name="Morton C.C."/>
            <person name="Gusella J.F."/>
            <person name="Bruns G.A.P."/>
            <person name="Korf B.R."/>
            <person name="Quade B.J."/>
            <person name="Ligon A.H."/>
            <person name="Ferguson H."/>
            <person name="Higgins A.W."/>
            <person name="Leach N.T."/>
            <person name="Herrick S.R."/>
            <person name="Lemyre E."/>
            <person name="Farra C.G."/>
            <person name="Kim H.-G."/>
            <person name="Summers A.M."/>
            <person name="Gripp K.W."/>
            <person name="Roberts W."/>
            <person name="Szatmari P."/>
            <person name="Winsor E.J.T."/>
            <person name="Grzeschik K.-H."/>
            <person name="Teebi A."/>
            <person name="Minassian B.A."/>
            <person name="Kere J."/>
            <person name="Armengol L."/>
            <person name="Pujana M.A."/>
            <person name="Estivill X."/>
            <person name="Wilson M.D."/>
            <person name="Koop B.F."/>
            <person name="Tosi S."/>
            <person name="Moore G.E."/>
            <person name="Boright A.P."/>
            <person name="Zlotorynski E."/>
            <person name="Kerem B."/>
            <person name="Kroisel P.M."/>
            <person name="Petek E."/>
            <person name="Oscier D.G."/>
            <person name="Mould S.J."/>
            <person name="Doehner H."/>
            <person name="Doehner K."/>
            <person name="Rommens J.M."/>
            <person name="Vincent J.B."/>
            <person name="Venter J.C."/>
            <person name="Li P.W."/>
            <person name="Mural R.J."/>
            <person name="Adams M.D."/>
            <person name="Tsui L.-C."/>
        </authorList>
    </citation>
    <scope>NUCLEOTIDE SEQUENCE [LARGE SCALE GENOMIC DNA]</scope>
</reference>
<reference key="5">
    <citation type="journal article" date="2004" name="Genome Res.">
        <title>The status, quality, and expansion of the NIH full-length cDNA project: the Mammalian Gene Collection (MGC).</title>
        <authorList>
            <consortium name="The MGC Project Team"/>
        </authorList>
    </citation>
    <scope>NUCLEOTIDE SEQUENCE [LARGE SCALE MRNA] (ISOFORM 1)</scope>
    <source>
        <tissue>Brain</tissue>
    </source>
</reference>
<reference key="6">
    <citation type="journal article" date="2007" name="BMC Genomics">
        <title>The full-ORF clone resource of the German cDNA consortium.</title>
        <authorList>
            <person name="Bechtel S."/>
            <person name="Rosenfelder H."/>
            <person name="Duda A."/>
            <person name="Schmidt C.P."/>
            <person name="Ernst U."/>
            <person name="Wellenreuther R."/>
            <person name="Mehrle A."/>
            <person name="Schuster C."/>
            <person name="Bahr A."/>
            <person name="Bloecker H."/>
            <person name="Heubner D."/>
            <person name="Hoerlein A."/>
            <person name="Michel G."/>
            <person name="Wedler H."/>
            <person name="Koehrer K."/>
            <person name="Ottenwaelder B."/>
            <person name="Poustka A."/>
            <person name="Wiemann S."/>
            <person name="Schupp I."/>
        </authorList>
    </citation>
    <scope>NUCLEOTIDE SEQUENCE [LARGE SCALE MRNA] (ISOFORM 2)</scope>
    <source>
        <tissue>Brain</tissue>
    </source>
</reference>
<reference key="7">
    <citation type="submission" date="2005-07" db="EMBL/GenBank/DDBJ databases">
        <authorList>
            <person name="Mural R.J."/>
            <person name="Istrail S."/>
            <person name="Sutton G."/>
            <person name="Florea L."/>
            <person name="Halpern A.L."/>
            <person name="Mobarry C.M."/>
            <person name="Lippert R."/>
            <person name="Walenz B."/>
            <person name="Shatkay H."/>
            <person name="Dew I."/>
            <person name="Miller J.R."/>
            <person name="Flanigan M.J."/>
            <person name="Edwards N.J."/>
            <person name="Bolanos R."/>
            <person name="Fasulo D."/>
            <person name="Halldorsson B.V."/>
            <person name="Hannenhalli S."/>
            <person name="Turner R."/>
            <person name="Yooseph S."/>
            <person name="Lu F."/>
            <person name="Nusskern D.R."/>
            <person name="Shue B.C."/>
            <person name="Zheng X.H."/>
            <person name="Zhong F."/>
            <person name="Delcher A.L."/>
            <person name="Huson D.H."/>
            <person name="Kravitz S.A."/>
            <person name="Mouchard L."/>
            <person name="Reinert K."/>
            <person name="Remington K.A."/>
            <person name="Clark A.G."/>
            <person name="Waterman M.S."/>
            <person name="Eichler E.E."/>
            <person name="Adams M.D."/>
            <person name="Hunkapiller M.W."/>
            <person name="Myers E.W."/>
            <person name="Venter J.C."/>
        </authorList>
    </citation>
    <scope>NUCLEOTIDE SEQUENCE [LARGE SCALE GENOMIC DNA]</scope>
</reference>
<reference key="8">
    <citation type="journal article" date="2015" name="Cell">
        <title>A single kinase generates the majority of the secreted phosphoproteome.</title>
        <authorList>
            <person name="Tagliabracci V.S."/>
            <person name="Wiley S.E."/>
            <person name="Guo X."/>
            <person name="Kinch L.N."/>
            <person name="Durrant E."/>
            <person name="Wen J."/>
            <person name="Xiao J."/>
            <person name="Cui J."/>
            <person name="Nguyen K.B."/>
            <person name="Engel J.L."/>
            <person name="Coon J.J."/>
            <person name="Grishin N."/>
            <person name="Pinna L.A."/>
            <person name="Pagliarini D.J."/>
            <person name="Dixon J.E."/>
        </authorList>
    </citation>
    <scope>PROTEIN SEQUENCE OF N-TERMINUS</scope>
    <scope>FUNCTION</scope>
    <scope>SUBCELLULAR LOCATION</scope>
    <scope>AUTOPHOSPHORYLATION</scope>
    <scope>GLYCOSYLATION AT ASN-101; ASN-335 AND ASN-470</scope>
    <scope>MUTAGENESIS OF 93-LEU--ASP-95; ASN-101; ASN-335; ASN-470 AND ASP-478</scope>
</reference>
<reference key="9">
    <citation type="journal article" date="2021" name="Proc. Natl. Acad. Sci. U.S.A.">
        <title>Proteolytic processing of secretory pathway kinase Fam20C by site-1 protease promotes biomineralization.</title>
        <authorList>
            <person name="Chen X."/>
            <person name="Zhang J."/>
            <person name="Liu P."/>
            <person name="Wei Y."/>
            <person name="Wang X."/>
            <person name="Xiao J."/>
            <person name="Wang C.C."/>
            <person name="Wang L."/>
        </authorList>
    </citation>
    <scope>PROTEIN SEQUENCE OF N-TERMINUS</scope>
    <scope>FUNCTION</scope>
    <scope>CATALYTIC ACTIVITY</scope>
    <scope>SUBUNIT</scope>
    <scope>INTERACTION WITH MBTPS1; SEC23A AND SEC24A</scope>
    <scope>SUBCELLULAR LOCATION</scope>
    <scope>TOPOLOGY</scope>
    <scope>AUTOPHOSPHORYLATION</scope>
    <scope>PHOSPHORYLATION AT SER-106</scope>
    <scope>MUTAGENESIS OF 28-ASP--PRO-31; CYS-46; CYS-48; ARG-89; ILE-90; LEU-91; GLN-92; SER-106 AND ASP-478</scope>
</reference>
<reference key="10">
    <citation type="journal article" date="2005" name="BMC Genomics">
        <title>FAM20: an evolutionarily conserved family of secreted proteins expressed in hematopoietic cells.</title>
        <authorList>
            <person name="Nalbant D."/>
            <person name="Youn H."/>
            <person name="Nalbant S.I."/>
            <person name="Sharma S."/>
            <person name="Cobos E."/>
            <person name="Beale E.G."/>
            <person name="Du Y."/>
            <person name="Williams S.C."/>
        </authorList>
    </citation>
    <scope>TISSUE SPECIFICITY</scope>
</reference>
<reference key="11">
    <citation type="journal article" date="2009" name="J. Proteome Res.">
        <title>Glycoproteomics analysis of human liver tissue by combination of multiple enzyme digestion and hydrazide chemistry.</title>
        <authorList>
            <person name="Chen R."/>
            <person name="Jiang X."/>
            <person name="Sun D."/>
            <person name="Han G."/>
            <person name="Wang F."/>
            <person name="Ye M."/>
            <person name="Wang L."/>
            <person name="Zou H."/>
        </authorList>
    </citation>
    <scope>GLYCOSYLATION [LARGE SCALE ANALYSIS] AT ASN-470</scope>
    <source>
        <tissue>Liver</tissue>
    </source>
</reference>
<reference key="12">
    <citation type="journal article" date="2012" name="Science">
        <title>Secreted kinase phosphorylates extracellular proteins that regulate biomineralization.</title>
        <authorList>
            <person name="Tagliabracci V.S."/>
            <person name="Engel J.L."/>
            <person name="Wen J."/>
            <person name="Wiley S.E."/>
            <person name="Worby C.A."/>
            <person name="Kinch L.N."/>
            <person name="Xiao J."/>
            <person name="Grishin N.V."/>
            <person name="Dixon J.E."/>
        </authorList>
    </citation>
    <scope>FUNCTION</scope>
    <scope>CATALYTIC ACTIVITY</scope>
    <scope>MANGANESE-BINDING</scope>
    <scope>MUTAGENESIS OF ASP-478</scope>
    <scope>VARIANTS RNS ASN-258; ARG-280; SER-328; ARG-379; GLU-379; ARG-388; ASN-451 AND TRP-549</scope>
    <scope>CHARACTERIZATION OF VARIANTS RNS SER-328 AND ASN-451</scope>
</reference>
<reference key="13">
    <citation type="journal article" date="2013" name="Proc. Natl. Acad. Sci. U.S.A.">
        <title>Crystal structure of the Golgi casein kinase.</title>
        <authorList>
            <person name="Xiao J."/>
            <person name="Tagliabracci V.S."/>
            <person name="Wen J."/>
            <person name="Kim S.A."/>
            <person name="Dixon J.E."/>
        </authorList>
    </citation>
    <scope>FUNCTION</scope>
    <scope>CATALYTIC ACTIVITY</scope>
    <scope>BIOPHYSICOCHEMICAL PROPERTIES</scope>
    <scope>COFACTOR</scope>
    <scope>ACTIVE SITE</scope>
    <scope>MUTAGENESIS OF LYS-271; LYS-285; GLU-306; GLU-311; ARG-408; ASP-458 AND ASP-458</scope>
</reference>
<reference key="14">
    <citation type="journal article" date="2015" name="Elife">
        <title>A secretory kinase complex regulates extracellular protein phosphorylation.</title>
        <authorList>
            <person name="Cui J."/>
            <person name="Xiao J."/>
            <person name="Tagliabracci V.S."/>
            <person name="Wen J."/>
            <person name="Rahdar M."/>
            <person name="Dixon J.E."/>
        </authorList>
    </citation>
    <scope>FUNCTION</scope>
    <scope>CATALYTIC ACTIVITY</scope>
    <scope>ACTIVITY REGULATION</scope>
    <scope>INTERACTION WITH FAM20A</scope>
    <scope>MUTAGENESIS OF GLU-306 AND ASP-478</scope>
    <scope>VARIANTS RNS MET-268 AND SER-328</scope>
    <scope>CHARACTERIZATION OF VARIANTS RNS MET-268 AND SER-328</scope>
</reference>
<reference key="15">
    <citation type="journal article" date="2018" name="EMBO J.">
        <title>Secretory kinase Fam20C tunes endoplasmic reticulum redox state via phosphorylation of Ero1alpha.</title>
        <authorList>
            <person name="Zhang J."/>
            <person name="Zhu Q."/>
            <person name="Wang X."/>
            <person name="Yu J."/>
            <person name="Chen X."/>
            <person name="Wang J."/>
            <person name="Wang X."/>
            <person name="Xiao J."/>
            <person name="Wang C.C."/>
            <person name="Wang L."/>
        </authorList>
    </citation>
    <scope>FUNCTION</scope>
    <scope>CATALYTIC ACTIVITY</scope>
    <scope>MUTAGENESIS OF ASP-478</scope>
</reference>
<reference key="16">
    <citation type="journal article" date="2020" name="EMBO J.">
        <title>Phosphorylation switches protein disulfide isomerase activity to maintain proteostasis and attenuate ER stress.</title>
        <authorList>
            <person name="Yu J."/>
            <person name="Li T."/>
            <person name="Liu Y."/>
            <person name="Wang X."/>
            <person name="Zhang J."/>
            <person name="Wang X."/>
            <person name="Shi G."/>
            <person name="Lou J."/>
            <person name="Wang L."/>
            <person name="Wang C.C."/>
            <person name="Wang L."/>
        </authorList>
    </citation>
    <scope>FUNCTION</scope>
    <scope>CATALYTIC ACTIVITY</scope>
    <scope>SUBCELLULAR LOCATION</scope>
</reference>
<reference key="17">
    <citation type="journal article" date="2007" name="Am. J. Hum. Genet.">
        <title>Mutations in FAM20C are associated with lethal osteosclerotic bone dysplasia (Raine syndrome), highlighting a crucial molecule in bone development.</title>
        <authorList>
            <person name="Simpson M.A."/>
            <person name="Hsu R."/>
            <person name="Keir L.S."/>
            <person name="Hao J."/>
            <person name="Sivapalan G."/>
            <person name="Ernst L.M."/>
            <person name="Zackai E.H."/>
            <person name="Al-Gazali L.I."/>
            <person name="Hulskamp G."/>
            <person name="Kingston H.M."/>
            <person name="Prescott T.E."/>
            <person name="Ion A."/>
            <person name="Patton M.A."/>
            <person name="Murday V."/>
            <person name="George A."/>
            <person name="Crosby A.H."/>
        </authorList>
    </citation>
    <scope>VARIANTS RNS ARG-379; GLU-379; ARG-388 AND TRP-549</scope>
</reference>
<evidence type="ECO:0000250" key="1">
    <source>
        <dbReference type="UniProtKB" id="Q5MJS3"/>
    </source>
</evidence>
<evidence type="ECO:0000250" key="2">
    <source>
        <dbReference type="UniProtKB" id="Q9XTW2"/>
    </source>
</evidence>
<evidence type="ECO:0000255" key="3"/>
<evidence type="ECO:0000256" key="4">
    <source>
        <dbReference type="SAM" id="MobiDB-lite"/>
    </source>
</evidence>
<evidence type="ECO:0000269" key="5">
    <source>
    </source>
</evidence>
<evidence type="ECO:0000269" key="6">
    <source>
    </source>
</evidence>
<evidence type="ECO:0000269" key="7">
    <source>
    </source>
</evidence>
<evidence type="ECO:0000269" key="8">
    <source>
    </source>
</evidence>
<evidence type="ECO:0000269" key="9">
    <source>
    </source>
</evidence>
<evidence type="ECO:0000269" key="10">
    <source>
    </source>
</evidence>
<evidence type="ECO:0000269" key="11">
    <source>
    </source>
</evidence>
<evidence type="ECO:0000269" key="12">
    <source>
    </source>
</evidence>
<evidence type="ECO:0000269" key="13">
    <source>
    </source>
</evidence>
<evidence type="ECO:0000269" key="14">
    <source>
    </source>
</evidence>
<evidence type="ECO:0000303" key="15">
    <source>
    </source>
</evidence>
<evidence type="ECO:0000303" key="16">
    <source>
    </source>
</evidence>
<evidence type="ECO:0000305" key="17"/>
<evidence type="ECO:0000305" key="18">
    <source>
    </source>
</evidence>
<evidence type="ECO:0000305" key="19">
    <source>
    </source>
</evidence>
<evidence type="ECO:0000312" key="20">
    <source>
        <dbReference type="HGNC" id="HGNC:22140"/>
    </source>
</evidence>
<evidence type="ECO:0007829" key="21">
    <source>
        <dbReference type="PDB" id="5YH3"/>
    </source>
</evidence>